<keyword id="KW-0067">ATP-binding</keyword>
<keyword id="KW-0319">Glycerol metabolism</keyword>
<keyword id="KW-0418">Kinase</keyword>
<keyword id="KW-0547">Nucleotide-binding</keyword>
<keyword id="KW-0597">Phosphoprotein</keyword>
<keyword id="KW-0808">Transferase</keyword>
<sequence length="508" mass="55997">MSQEKYIMAIDQGTTSSRAIIFNQKGEKVSSSQKEFPQIFPHAGWVEHNANQIWNSVQSVIAGAFIESSIKPSQIEAIGITNQRETTVVWDKKTGVPIYNAIVWQSRQTAPIAEQLKEDGHTKMIHEKTGLVIDAYFSATKIRWILDHVPGAQERAEKGELLFGTIDTWLVWKLTDGAVHVTDYSNAARTMLYNIKDLTWDDEILELLNIPKDMLPEVKSNSEIYGKTAAFHFYGGEVPISGMAGDQQAALFGQLAFEPGMVKNTYGTGSFIIMNTGDEMQLSSNNLLTTIGYGIGGKVHYALEGSIFIAGSAIQWLRDGLKMIETSPESEQFALASTSDDEVYVVPAFTGLGAPYWDSNARGSVFGLTRGTSKEDFVKATLQSIAYQVRDVIDTMQVDSGIDIQQLRVDGGAAMNNMLMQFQADILGIDIARAKNLETTALGAAFLAGLAVGYWEDMDALKELNATGQLFKASMNESRKEKLYKGWKRAVKATQVFTQEEDADDDAK</sequence>
<accession>Q1J5E4</accession>
<feature type="chain" id="PRO_1000020802" description="Glycerol kinase">
    <location>
        <begin position="1"/>
        <end position="508"/>
    </location>
</feature>
<feature type="binding site" evidence="1">
    <location>
        <position position="14"/>
    </location>
    <ligand>
        <name>ADP</name>
        <dbReference type="ChEBI" id="CHEBI:456216"/>
    </ligand>
</feature>
<feature type="binding site" evidence="1">
    <location>
        <position position="14"/>
    </location>
    <ligand>
        <name>ATP</name>
        <dbReference type="ChEBI" id="CHEBI:30616"/>
    </ligand>
</feature>
<feature type="binding site" evidence="1">
    <location>
        <position position="14"/>
    </location>
    <ligand>
        <name>sn-glycerol 3-phosphate</name>
        <dbReference type="ChEBI" id="CHEBI:57597"/>
    </ligand>
</feature>
<feature type="binding site" evidence="1">
    <location>
        <position position="15"/>
    </location>
    <ligand>
        <name>ATP</name>
        <dbReference type="ChEBI" id="CHEBI:30616"/>
    </ligand>
</feature>
<feature type="binding site" evidence="1">
    <location>
        <position position="16"/>
    </location>
    <ligand>
        <name>ATP</name>
        <dbReference type="ChEBI" id="CHEBI:30616"/>
    </ligand>
</feature>
<feature type="binding site" evidence="1">
    <location>
        <position position="18"/>
    </location>
    <ligand>
        <name>ADP</name>
        <dbReference type="ChEBI" id="CHEBI:456216"/>
    </ligand>
</feature>
<feature type="binding site" evidence="1">
    <location>
        <position position="84"/>
    </location>
    <ligand>
        <name>glycerol</name>
        <dbReference type="ChEBI" id="CHEBI:17754"/>
    </ligand>
</feature>
<feature type="binding site" evidence="1">
    <location>
        <position position="84"/>
    </location>
    <ligand>
        <name>sn-glycerol 3-phosphate</name>
        <dbReference type="ChEBI" id="CHEBI:57597"/>
    </ligand>
</feature>
<feature type="binding site" evidence="1">
    <location>
        <position position="85"/>
    </location>
    <ligand>
        <name>glycerol</name>
        <dbReference type="ChEBI" id="CHEBI:17754"/>
    </ligand>
</feature>
<feature type="binding site" evidence="1">
    <location>
        <position position="85"/>
    </location>
    <ligand>
        <name>sn-glycerol 3-phosphate</name>
        <dbReference type="ChEBI" id="CHEBI:57597"/>
    </ligand>
</feature>
<feature type="binding site" evidence="1">
    <location>
        <position position="136"/>
    </location>
    <ligand>
        <name>glycerol</name>
        <dbReference type="ChEBI" id="CHEBI:17754"/>
    </ligand>
</feature>
<feature type="binding site" evidence="1">
    <location>
        <position position="136"/>
    </location>
    <ligand>
        <name>sn-glycerol 3-phosphate</name>
        <dbReference type="ChEBI" id="CHEBI:57597"/>
    </ligand>
</feature>
<feature type="binding site" evidence="1">
    <location>
        <position position="246"/>
    </location>
    <ligand>
        <name>glycerol</name>
        <dbReference type="ChEBI" id="CHEBI:17754"/>
    </ligand>
</feature>
<feature type="binding site" evidence="1">
    <location>
        <position position="246"/>
    </location>
    <ligand>
        <name>sn-glycerol 3-phosphate</name>
        <dbReference type="ChEBI" id="CHEBI:57597"/>
    </ligand>
</feature>
<feature type="binding site" evidence="1">
    <location>
        <position position="247"/>
    </location>
    <ligand>
        <name>glycerol</name>
        <dbReference type="ChEBI" id="CHEBI:17754"/>
    </ligand>
</feature>
<feature type="binding site" evidence="1">
    <location>
        <position position="268"/>
    </location>
    <ligand>
        <name>ADP</name>
        <dbReference type="ChEBI" id="CHEBI:456216"/>
    </ligand>
</feature>
<feature type="binding site" evidence="1">
    <location>
        <position position="268"/>
    </location>
    <ligand>
        <name>ATP</name>
        <dbReference type="ChEBI" id="CHEBI:30616"/>
    </ligand>
</feature>
<feature type="binding site" evidence="1">
    <location>
        <position position="311"/>
    </location>
    <ligand>
        <name>ADP</name>
        <dbReference type="ChEBI" id="CHEBI:456216"/>
    </ligand>
</feature>
<feature type="binding site" evidence="1">
    <location>
        <position position="311"/>
    </location>
    <ligand>
        <name>ATP</name>
        <dbReference type="ChEBI" id="CHEBI:30616"/>
    </ligand>
</feature>
<feature type="binding site" evidence="1">
    <location>
        <position position="315"/>
    </location>
    <ligand>
        <name>ATP</name>
        <dbReference type="ChEBI" id="CHEBI:30616"/>
    </ligand>
</feature>
<feature type="binding site" evidence="1">
    <location>
        <position position="412"/>
    </location>
    <ligand>
        <name>ADP</name>
        <dbReference type="ChEBI" id="CHEBI:456216"/>
    </ligand>
</feature>
<feature type="binding site" evidence="1">
    <location>
        <position position="412"/>
    </location>
    <ligand>
        <name>ATP</name>
        <dbReference type="ChEBI" id="CHEBI:30616"/>
    </ligand>
</feature>
<feature type="binding site" evidence="1">
    <location>
        <position position="416"/>
    </location>
    <ligand>
        <name>ADP</name>
        <dbReference type="ChEBI" id="CHEBI:456216"/>
    </ligand>
</feature>
<feature type="modified residue" description="Phosphohistidine; by HPr" evidence="1">
    <location>
        <position position="232"/>
    </location>
</feature>
<reference key="1">
    <citation type="journal article" date="2006" name="Proc. Natl. Acad. Sci. U.S.A.">
        <title>Molecular genetic anatomy of inter- and intraserotype variation in the human bacterial pathogen group A Streptococcus.</title>
        <authorList>
            <person name="Beres S.B."/>
            <person name="Richter E.W."/>
            <person name="Nagiec M.J."/>
            <person name="Sumby P."/>
            <person name="Porcella S.F."/>
            <person name="DeLeo F.R."/>
            <person name="Musser J.M."/>
        </authorList>
    </citation>
    <scope>NUCLEOTIDE SEQUENCE [LARGE SCALE GENOMIC DNA]</scope>
    <source>
        <strain>MGAS10750</strain>
    </source>
</reference>
<evidence type="ECO:0000255" key="1">
    <source>
        <dbReference type="HAMAP-Rule" id="MF_00186"/>
    </source>
</evidence>
<organism>
    <name type="scientific">Streptococcus pyogenes serotype M4 (strain MGAS10750)</name>
    <dbReference type="NCBI Taxonomy" id="370554"/>
    <lineage>
        <taxon>Bacteria</taxon>
        <taxon>Bacillati</taxon>
        <taxon>Bacillota</taxon>
        <taxon>Bacilli</taxon>
        <taxon>Lactobacillales</taxon>
        <taxon>Streptococcaceae</taxon>
        <taxon>Streptococcus</taxon>
    </lineage>
</organism>
<name>GLPK_STRPF</name>
<proteinExistence type="inferred from homology"/>
<gene>
    <name evidence="1" type="primary">glpK</name>
    <name type="ordered locus">MGAS10750_Spy1492</name>
</gene>
<dbReference type="EC" id="2.7.1.30" evidence="1"/>
<dbReference type="EMBL" id="CP000262">
    <property type="protein sequence ID" value="ABF38442.1"/>
    <property type="molecule type" value="Genomic_DNA"/>
</dbReference>
<dbReference type="SMR" id="Q1J5E4"/>
<dbReference type="KEGG" id="spi:MGAS10750_Spy1492"/>
<dbReference type="HOGENOM" id="CLU_009281_2_3_9"/>
<dbReference type="UniPathway" id="UPA00618">
    <property type="reaction ID" value="UER00672"/>
</dbReference>
<dbReference type="Proteomes" id="UP000002434">
    <property type="component" value="Chromosome"/>
</dbReference>
<dbReference type="GO" id="GO:0005829">
    <property type="term" value="C:cytosol"/>
    <property type="evidence" value="ECO:0007669"/>
    <property type="project" value="TreeGrafter"/>
</dbReference>
<dbReference type="GO" id="GO:0005524">
    <property type="term" value="F:ATP binding"/>
    <property type="evidence" value="ECO:0007669"/>
    <property type="project" value="UniProtKB-UniRule"/>
</dbReference>
<dbReference type="GO" id="GO:0004370">
    <property type="term" value="F:glycerol kinase activity"/>
    <property type="evidence" value="ECO:0000250"/>
    <property type="project" value="UniProtKB"/>
</dbReference>
<dbReference type="GO" id="GO:0019563">
    <property type="term" value="P:glycerol catabolic process"/>
    <property type="evidence" value="ECO:0007669"/>
    <property type="project" value="UniProtKB-UniRule"/>
</dbReference>
<dbReference type="GO" id="GO:0006071">
    <property type="term" value="P:glycerol metabolic process"/>
    <property type="evidence" value="ECO:0000250"/>
    <property type="project" value="UniProtKB"/>
</dbReference>
<dbReference type="GO" id="GO:0006072">
    <property type="term" value="P:glycerol-3-phosphate metabolic process"/>
    <property type="evidence" value="ECO:0007669"/>
    <property type="project" value="InterPro"/>
</dbReference>
<dbReference type="CDD" id="cd07786">
    <property type="entry name" value="FGGY_EcGK_like"/>
    <property type="match status" value="1"/>
</dbReference>
<dbReference type="FunFam" id="3.30.420.40:FF:000007">
    <property type="entry name" value="Glycerol kinase"/>
    <property type="match status" value="1"/>
</dbReference>
<dbReference type="FunFam" id="3.30.420.40:FF:000008">
    <property type="entry name" value="Glycerol kinase"/>
    <property type="match status" value="1"/>
</dbReference>
<dbReference type="Gene3D" id="3.30.420.40">
    <property type="match status" value="2"/>
</dbReference>
<dbReference type="HAMAP" id="MF_00186">
    <property type="entry name" value="Glycerol_kin"/>
    <property type="match status" value="1"/>
</dbReference>
<dbReference type="InterPro" id="IPR043129">
    <property type="entry name" value="ATPase_NBD"/>
</dbReference>
<dbReference type="InterPro" id="IPR000577">
    <property type="entry name" value="Carb_kinase_FGGY"/>
</dbReference>
<dbReference type="InterPro" id="IPR018483">
    <property type="entry name" value="Carb_kinase_FGGY_CS"/>
</dbReference>
<dbReference type="InterPro" id="IPR018485">
    <property type="entry name" value="FGGY_C"/>
</dbReference>
<dbReference type="InterPro" id="IPR018484">
    <property type="entry name" value="FGGY_N"/>
</dbReference>
<dbReference type="InterPro" id="IPR005999">
    <property type="entry name" value="Glycerol_kin"/>
</dbReference>
<dbReference type="NCBIfam" id="TIGR01311">
    <property type="entry name" value="glycerol_kin"/>
    <property type="match status" value="1"/>
</dbReference>
<dbReference type="NCBIfam" id="NF000756">
    <property type="entry name" value="PRK00047.1"/>
    <property type="match status" value="1"/>
</dbReference>
<dbReference type="PANTHER" id="PTHR10196:SF69">
    <property type="entry name" value="GLYCEROL KINASE"/>
    <property type="match status" value="1"/>
</dbReference>
<dbReference type="PANTHER" id="PTHR10196">
    <property type="entry name" value="SUGAR KINASE"/>
    <property type="match status" value="1"/>
</dbReference>
<dbReference type="Pfam" id="PF02782">
    <property type="entry name" value="FGGY_C"/>
    <property type="match status" value="1"/>
</dbReference>
<dbReference type="Pfam" id="PF00370">
    <property type="entry name" value="FGGY_N"/>
    <property type="match status" value="1"/>
</dbReference>
<dbReference type="PIRSF" id="PIRSF000538">
    <property type="entry name" value="GlpK"/>
    <property type="match status" value="1"/>
</dbReference>
<dbReference type="SUPFAM" id="SSF53067">
    <property type="entry name" value="Actin-like ATPase domain"/>
    <property type="match status" value="2"/>
</dbReference>
<dbReference type="PROSITE" id="PS00933">
    <property type="entry name" value="FGGY_KINASES_1"/>
    <property type="match status" value="1"/>
</dbReference>
<dbReference type="PROSITE" id="PS00445">
    <property type="entry name" value="FGGY_KINASES_2"/>
    <property type="match status" value="1"/>
</dbReference>
<comment type="function">
    <text evidence="1">Key enzyme in the regulation of glycerol uptake and metabolism. Catalyzes the phosphorylation of glycerol to yield sn-glycerol 3-phosphate.</text>
</comment>
<comment type="catalytic activity">
    <reaction evidence="1">
        <text>glycerol + ATP = sn-glycerol 3-phosphate + ADP + H(+)</text>
        <dbReference type="Rhea" id="RHEA:21644"/>
        <dbReference type="ChEBI" id="CHEBI:15378"/>
        <dbReference type="ChEBI" id="CHEBI:17754"/>
        <dbReference type="ChEBI" id="CHEBI:30616"/>
        <dbReference type="ChEBI" id="CHEBI:57597"/>
        <dbReference type="ChEBI" id="CHEBI:456216"/>
        <dbReference type="EC" id="2.7.1.30"/>
    </reaction>
</comment>
<comment type="activity regulation">
    <text evidence="1">Activated by phosphorylation and inhibited by fructose 1,6-bisphosphate (FBP).</text>
</comment>
<comment type="pathway">
    <text evidence="1">Polyol metabolism; glycerol degradation via glycerol kinase pathway; sn-glycerol 3-phosphate from glycerol: step 1/1.</text>
</comment>
<comment type="subunit">
    <text evidence="1">Homotetramer and homodimer (in equilibrium).</text>
</comment>
<comment type="PTM">
    <text evidence="1">The phosphoenolpyruvate-dependent sugar phosphotransferase system (PTS), including enzyme I, and histidine-containing protein (HPr) are required for the phosphorylation, which leads to the activation of the enzyme.</text>
</comment>
<comment type="similarity">
    <text evidence="1">Belongs to the FGGY kinase family.</text>
</comment>
<protein>
    <recommendedName>
        <fullName evidence="1">Glycerol kinase</fullName>
        <ecNumber evidence="1">2.7.1.30</ecNumber>
    </recommendedName>
    <alternativeName>
        <fullName evidence="1">ATP:glycerol 3-phosphotransferase</fullName>
    </alternativeName>
    <alternativeName>
        <fullName evidence="1">Glycerokinase</fullName>
        <shortName evidence="1">GK</shortName>
    </alternativeName>
</protein>